<protein>
    <recommendedName>
        <fullName evidence="1">Co-chaperonin GroES</fullName>
    </recommendedName>
    <alternativeName>
        <fullName evidence="1">10 kDa chaperonin</fullName>
    </alternativeName>
    <alternativeName>
        <fullName evidence="1">Chaperonin-10</fullName>
        <shortName evidence="1">Cpn10</shortName>
    </alternativeName>
</protein>
<comment type="function">
    <text evidence="1">Together with the chaperonin GroEL, plays an essential role in assisting protein folding. The GroEL-GroES system forms a nano-cage that allows encapsulation of the non-native substrate proteins and provides a physical environment optimized to promote and accelerate protein folding. GroES binds to the apical surface of the GroEL ring, thereby capping the opening of the GroEL channel.</text>
</comment>
<comment type="subunit">
    <text evidence="1">Heptamer of 7 subunits arranged in a ring. Interacts with the chaperonin GroEL.</text>
</comment>
<comment type="subcellular location">
    <subcellularLocation>
        <location evidence="1">Cytoplasm</location>
    </subcellularLocation>
</comment>
<comment type="similarity">
    <text evidence="1">Belongs to the GroES chaperonin family.</text>
</comment>
<proteinExistence type="inferred from homology"/>
<gene>
    <name evidence="1" type="primary">groES</name>
    <name evidence="1" type="synonym">groS</name>
    <name type="ordered locus">BQ10760</name>
</gene>
<organism>
    <name type="scientific">Bartonella quintana (strain Toulouse)</name>
    <name type="common">Rochalimaea quintana</name>
    <dbReference type="NCBI Taxonomy" id="283165"/>
    <lineage>
        <taxon>Bacteria</taxon>
        <taxon>Pseudomonadati</taxon>
        <taxon>Pseudomonadota</taxon>
        <taxon>Alphaproteobacteria</taxon>
        <taxon>Hyphomicrobiales</taxon>
        <taxon>Bartonellaceae</taxon>
        <taxon>Bartonella</taxon>
    </lineage>
</organism>
<name>CH10_BARQU</name>
<reference key="1">
    <citation type="journal article" date="2004" name="Proc. Natl. Acad. Sci. U.S.A.">
        <title>The louse-borne human pathogen Bartonella quintana is a genomic derivative of the zoonotic agent Bartonella henselae.</title>
        <authorList>
            <person name="Alsmark U.C.M."/>
            <person name="Frank A.C."/>
            <person name="Karlberg E.O."/>
            <person name="Legault B.-A."/>
            <person name="Ardell D.H."/>
            <person name="Canbaeck B."/>
            <person name="Eriksson A.-S."/>
            <person name="Naeslund A.K."/>
            <person name="Handley S.A."/>
            <person name="Huvet M."/>
            <person name="La Scola B."/>
            <person name="Holmberg M."/>
            <person name="Andersson S.G.E."/>
        </authorList>
    </citation>
    <scope>NUCLEOTIDE SEQUENCE [LARGE SCALE GENOMIC DNA]</scope>
    <source>
        <strain>Toulouse</strain>
    </source>
</reference>
<keyword id="KW-0143">Chaperone</keyword>
<keyword id="KW-0963">Cytoplasm</keyword>
<dbReference type="EMBL" id="BX897700">
    <property type="protein sequence ID" value="CAF26543.1"/>
    <property type="molecule type" value="Genomic_DNA"/>
</dbReference>
<dbReference type="RefSeq" id="WP_006590484.1">
    <property type="nucleotide sequence ID" value="NC_005955.1"/>
</dbReference>
<dbReference type="SMR" id="Q6FYU9"/>
<dbReference type="GeneID" id="56533420"/>
<dbReference type="KEGG" id="bqu:BQ10760"/>
<dbReference type="eggNOG" id="COG0234">
    <property type="taxonomic scope" value="Bacteria"/>
</dbReference>
<dbReference type="HOGENOM" id="CLU_132825_1_0_5"/>
<dbReference type="OrthoDB" id="9806791at2"/>
<dbReference type="Proteomes" id="UP000000597">
    <property type="component" value="Chromosome"/>
</dbReference>
<dbReference type="GO" id="GO:0005737">
    <property type="term" value="C:cytoplasm"/>
    <property type="evidence" value="ECO:0007669"/>
    <property type="project" value="UniProtKB-SubCell"/>
</dbReference>
<dbReference type="GO" id="GO:0005524">
    <property type="term" value="F:ATP binding"/>
    <property type="evidence" value="ECO:0007669"/>
    <property type="project" value="InterPro"/>
</dbReference>
<dbReference type="GO" id="GO:0046872">
    <property type="term" value="F:metal ion binding"/>
    <property type="evidence" value="ECO:0007669"/>
    <property type="project" value="TreeGrafter"/>
</dbReference>
<dbReference type="GO" id="GO:0044183">
    <property type="term" value="F:protein folding chaperone"/>
    <property type="evidence" value="ECO:0007669"/>
    <property type="project" value="InterPro"/>
</dbReference>
<dbReference type="GO" id="GO:0051087">
    <property type="term" value="F:protein-folding chaperone binding"/>
    <property type="evidence" value="ECO:0007669"/>
    <property type="project" value="TreeGrafter"/>
</dbReference>
<dbReference type="GO" id="GO:0051082">
    <property type="term" value="F:unfolded protein binding"/>
    <property type="evidence" value="ECO:0007669"/>
    <property type="project" value="TreeGrafter"/>
</dbReference>
<dbReference type="GO" id="GO:0051085">
    <property type="term" value="P:chaperone cofactor-dependent protein refolding"/>
    <property type="evidence" value="ECO:0007669"/>
    <property type="project" value="TreeGrafter"/>
</dbReference>
<dbReference type="CDD" id="cd00320">
    <property type="entry name" value="cpn10"/>
    <property type="match status" value="1"/>
</dbReference>
<dbReference type="FunFam" id="2.30.33.40:FF:000001">
    <property type="entry name" value="10 kDa chaperonin"/>
    <property type="match status" value="1"/>
</dbReference>
<dbReference type="Gene3D" id="2.30.33.40">
    <property type="entry name" value="GroES chaperonin"/>
    <property type="match status" value="1"/>
</dbReference>
<dbReference type="HAMAP" id="MF_00580">
    <property type="entry name" value="CH10"/>
    <property type="match status" value="1"/>
</dbReference>
<dbReference type="InterPro" id="IPR020818">
    <property type="entry name" value="Chaperonin_GroES"/>
</dbReference>
<dbReference type="InterPro" id="IPR037124">
    <property type="entry name" value="Chaperonin_GroES_sf"/>
</dbReference>
<dbReference type="InterPro" id="IPR018369">
    <property type="entry name" value="Chaprnonin_Cpn10_CS"/>
</dbReference>
<dbReference type="InterPro" id="IPR011032">
    <property type="entry name" value="GroES-like_sf"/>
</dbReference>
<dbReference type="NCBIfam" id="NF001527">
    <property type="entry name" value="PRK00364.1-2"/>
    <property type="match status" value="1"/>
</dbReference>
<dbReference type="NCBIfam" id="NF001529">
    <property type="entry name" value="PRK00364.1-5"/>
    <property type="match status" value="1"/>
</dbReference>
<dbReference type="NCBIfam" id="NF001531">
    <property type="entry name" value="PRK00364.2-2"/>
    <property type="match status" value="1"/>
</dbReference>
<dbReference type="NCBIfam" id="NF001533">
    <property type="entry name" value="PRK00364.2-4"/>
    <property type="match status" value="1"/>
</dbReference>
<dbReference type="NCBIfam" id="NF001534">
    <property type="entry name" value="PRK00364.2-5"/>
    <property type="match status" value="1"/>
</dbReference>
<dbReference type="PANTHER" id="PTHR10772">
    <property type="entry name" value="10 KDA HEAT SHOCK PROTEIN"/>
    <property type="match status" value="1"/>
</dbReference>
<dbReference type="PANTHER" id="PTHR10772:SF58">
    <property type="entry name" value="CO-CHAPERONIN GROES"/>
    <property type="match status" value="1"/>
</dbReference>
<dbReference type="Pfam" id="PF00166">
    <property type="entry name" value="Cpn10"/>
    <property type="match status" value="1"/>
</dbReference>
<dbReference type="PRINTS" id="PR00297">
    <property type="entry name" value="CHAPERONIN10"/>
</dbReference>
<dbReference type="SMART" id="SM00883">
    <property type="entry name" value="Cpn10"/>
    <property type="match status" value="1"/>
</dbReference>
<dbReference type="SUPFAM" id="SSF50129">
    <property type="entry name" value="GroES-like"/>
    <property type="match status" value="1"/>
</dbReference>
<dbReference type="PROSITE" id="PS00681">
    <property type="entry name" value="CHAPERONINS_CPN10"/>
    <property type="match status" value="1"/>
</dbReference>
<accession>Q6FYU9</accession>
<evidence type="ECO:0000255" key="1">
    <source>
        <dbReference type="HAMAP-Rule" id="MF_00580"/>
    </source>
</evidence>
<feature type="chain" id="PRO_1000025214" description="Co-chaperonin GroES">
    <location>
        <begin position="1"/>
        <end position="98"/>
    </location>
</feature>
<sequence length="98" mass="10710">MANIQFRPLHDRVVVRRVESENKTAGGIIIPDTAKEKPQEGEIIAVGNGALDDNGKRVPLEVKTGDRILFGKWSGTEVKINGEDLLIMKESDIMGILG</sequence>